<proteinExistence type="inferred from homology"/>
<organism>
    <name type="scientific">Cereibacter sphaeroides (strain KD131 / KCTC 12085)</name>
    <name type="common">Rhodobacter sphaeroides</name>
    <dbReference type="NCBI Taxonomy" id="557760"/>
    <lineage>
        <taxon>Bacteria</taxon>
        <taxon>Pseudomonadati</taxon>
        <taxon>Pseudomonadota</taxon>
        <taxon>Alphaproteobacteria</taxon>
        <taxon>Rhodobacterales</taxon>
        <taxon>Paracoccaceae</taxon>
        <taxon>Cereibacter</taxon>
    </lineage>
</organism>
<gene>
    <name evidence="1" type="primary">rplY</name>
    <name evidence="1" type="synonym">ctc</name>
    <name type="ordered locus">RSKD131_2194</name>
</gene>
<dbReference type="EMBL" id="CP001150">
    <property type="protein sequence ID" value="ACM02054.1"/>
    <property type="molecule type" value="Genomic_DNA"/>
</dbReference>
<dbReference type="RefSeq" id="WP_002721014.1">
    <property type="nucleotide sequence ID" value="NC_011963.1"/>
</dbReference>
<dbReference type="SMR" id="B9KMG3"/>
<dbReference type="GeneID" id="67447581"/>
<dbReference type="KEGG" id="rsk:RSKD131_2194"/>
<dbReference type="HOGENOM" id="CLU_075939_0_0_5"/>
<dbReference type="GO" id="GO:0022625">
    <property type="term" value="C:cytosolic large ribosomal subunit"/>
    <property type="evidence" value="ECO:0007669"/>
    <property type="project" value="TreeGrafter"/>
</dbReference>
<dbReference type="GO" id="GO:0008097">
    <property type="term" value="F:5S rRNA binding"/>
    <property type="evidence" value="ECO:0007669"/>
    <property type="project" value="InterPro"/>
</dbReference>
<dbReference type="GO" id="GO:0003735">
    <property type="term" value="F:structural constituent of ribosome"/>
    <property type="evidence" value="ECO:0007669"/>
    <property type="project" value="InterPro"/>
</dbReference>
<dbReference type="GO" id="GO:0006412">
    <property type="term" value="P:translation"/>
    <property type="evidence" value="ECO:0007669"/>
    <property type="project" value="UniProtKB-UniRule"/>
</dbReference>
<dbReference type="CDD" id="cd00495">
    <property type="entry name" value="Ribosomal_L25_TL5_CTC"/>
    <property type="match status" value="1"/>
</dbReference>
<dbReference type="Gene3D" id="2.170.120.20">
    <property type="entry name" value="Ribosomal protein L25, beta domain"/>
    <property type="match status" value="1"/>
</dbReference>
<dbReference type="Gene3D" id="2.40.240.10">
    <property type="entry name" value="Ribosomal Protein L25, Chain P"/>
    <property type="match status" value="1"/>
</dbReference>
<dbReference type="HAMAP" id="MF_01334">
    <property type="entry name" value="Ribosomal_bL25_CTC"/>
    <property type="match status" value="1"/>
</dbReference>
<dbReference type="InterPro" id="IPR020056">
    <property type="entry name" value="Rbsml_bL25/Gln-tRNA_synth_N"/>
</dbReference>
<dbReference type="InterPro" id="IPR011035">
    <property type="entry name" value="Ribosomal_bL25/Gln-tRNA_synth"/>
</dbReference>
<dbReference type="InterPro" id="IPR020057">
    <property type="entry name" value="Ribosomal_bL25_b-dom"/>
</dbReference>
<dbReference type="InterPro" id="IPR037121">
    <property type="entry name" value="Ribosomal_bL25_C"/>
</dbReference>
<dbReference type="InterPro" id="IPR001021">
    <property type="entry name" value="Ribosomal_bL25_long"/>
</dbReference>
<dbReference type="InterPro" id="IPR029751">
    <property type="entry name" value="Ribosomal_L25_dom"/>
</dbReference>
<dbReference type="InterPro" id="IPR020930">
    <property type="entry name" value="Ribosomal_uL5_bac-type"/>
</dbReference>
<dbReference type="NCBIfam" id="TIGR00731">
    <property type="entry name" value="bL25_bact_ctc"/>
    <property type="match status" value="1"/>
</dbReference>
<dbReference type="NCBIfam" id="NF004128">
    <property type="entry name" value="PRK05618.1-2"/>
    <property type="match status" value="1"/>
</dbReference>
<dbReference type="NCBIfam" id="NF004612">
    <property type="entry name" value="PRK05943.1"/>
    <property type="match status" value="1"/>
</dbReference>
<dbReference type="PANTHER" id="PTHR33284">
    <property type="entry name" value="RIBOSOMAL PROTEIN L25/GLN-TRNA SYNTHETASE, ANTI-CODON-BINDING DOMAIN-CONTAINING PROTEIN"/>
    <property type="match status" value="1"/>
</dbReference>
<dbReference type="PANTHER" id="PTHR33284:SF1">
    <property type="entry name" value="RIBOSOMAL PROTEIN L25_GLN-TRNA SYNTHETASE, ANTI-CODON-BINDING DOMAIN-CONTAINING PROTEIN"/>
    <property type="match status" value="1"/>
</dbReference>
<dbReference type="Pfam" id="PF01386">
    <property type="entry name" value="Ribosomal_L25p"/>
    <property type="match status" value="1"/>
</dbReference>
<dbReference type="Pfam" id="PF14693">
    <property type="entry name" value="Ribosomal_TL5_C"/>
    <property type="match status" value="1"/>
</dbReference>
<dbReference type="SUPFAM" id="SSF50715">
    <property type="entry name" value="Ribosomal protein L25-like"/>
    <property type="match status" value="1"/>
</dbReference>
<name>RL25_CERSK</name>
<protein>
    <recommendedName>
        <fullName evidence="1">Large ribosomal subunit protein bL25</fullName>
    </recommendedName>
    <alternativeName>
        <fullName evidence="2">50S ribosomal protein L25</fullName>
    </alternativeName>
    <alternativeName>
        <fullName evidence="1">General stress protein CTC</fullName>
    </alternativeName>
</protein>
<keyword id="KW-0687">Ribonucleoprotein</keyword>
<keyword id="KW-0689">Ribosomal protein</keyword>
<keyword id="KW-0694">RNA-binding</keyword>
<keyword id="KW-0699">rRNA-binding</keyword>
<feature type="chain" id="PRO_1000166181" description="Large ribosomal subunit protein bL25">
    <location>
        <begin position="1"/>
        <end position="203"/>
    </location>
</feature>
<accession>B9KMG3</accession>
<sequence>MAGEIPDFQAEVRTGTGKGAARQARREGYVPGIVYGGGQEPLSINVPYNDLLNRLKKGRFLQTLFNLKVEGQEDVRVICRGVQRDVVKDLPTHVDFMRLRRTSRVNLFIHVTFENHDKAPGLKRGGTLTVVRPEVELEVTAGDIPDHLTVDLTDRQIGDVIHINDIKLPEGAVPTINRNFVIANISAPSGLRSSDNEEEAEEA</sequence>
<comment type="function">
    <text evidence="1">This is one of the proteins that binds to the 5S RNA in the ribosome where it forms part of the central protuberance.</text>
</comment>
<comment type="subunit">
    <text evidence="1">Part of the 50S ribosomal subunit; part of the 5S rRNA/L5/L18/L25 subcomplex. Contacts the 5S rRNA. Binds to the 5S rRNA independently of L5 and L18.</text>
</comment>
<comment type="similarity">
    <text evidence="1">Belongs to the bacterial ribosomal protein bL25 family. CTC subfamily.</text>
</comment>
<reference key="1">
    <citation type="journal article" date="2009" name="J. Bacteriol.">
        <title>Complete genome sequence of Rhodobacter sphaeroides KD131.</title>
        <authorList>
            <person name="Lim S.-K."/>
            <person name="Kim S.J."/>
            <person name="Cha S.H."/>
            <person name="Oh Y.-K."/>
            <person name="Rhee H.-J."/>
            <person name="Kim M.-S."/>
            <person name="Lee J.K."/>
        </authorList>
    </citation>
    <scope>NUCLEOTIDE SEQUENCE [LARGE SCALE GENOMIC DNA]</scope>
    <source>
        <strain>KD131 / KCTC 12085</strain>
    </source>
</reference>
<evidence type="ECO:0000255" key="1">
    <source>
        <dbReference type="HAMAP-Rule" id="MF_01334"/>
    </source>
</evidence>
<evidence type="ECO:0000305" key="2"/>